<sequence>MNNKISVYDKDNFFELYQKLRANPISLNEIIEKPTMLSLLPNLKGKKLLDLGCGTGGHLQLYLERGAAKVIGTDLSEKMLEQAEKDLQKCGQFSGRFSLYHLPIEKLAELPESHFDVITSSFAFHYIENFPTLLSTIHDKLSSNGTLIFSQEHPITTCHKEGERWEKNDKKQQVAYRLNHYREEGKRNRNWFKQPFQTYHRTTATIINNLIHARFQIEQMEEPMLADQPQWHNEFKDLSHRPPLLFIKARKVEK</sequence>
<keyword id="KW-1185">Reference proteome</keyword>
<feature type="chain" id="PRO_0000077974" description="Uncharacterized protein HI_0912">
    <location>
        <begin position="1"/>
        <end position="254"/>
    </location>
</feature>
<gene>
    <name type="ordered locus">HI_0912</name>
</gene>
<proteinExistence type="predicted"/>
<accession>P44074</accession>
<name>Y912_HAEIN</name>
<dbReference type="EMBL" id="L42023">
    <property type="protein sequence ID" value="AAC22579.1"/>
    <property type="molecule type" value="Genomic_DNA"/>
</dbReference>
<dbReference type="PIR" id="B64016">
    <property type="entry name" value="B64016"/>
</dbReference>
<dbReference type="RefSeq" id="NP_439072.1">
    <property type="nucleotide sequence ID" value="NC_000907.1"/>
</dbReference>
<dbReference type="SMR" id="P44074"/>
<dbReference type="STRING" id="71421.HI_0912"/>
<dbReference type="EnsemblBacteria" id="AAC22579">
    <property type="protein sequence ID" value="AAC22579"/>
    <property type="gene ID" value="HI_0912"/>
</dbReference>
<dbReference type="KEGG" id="hin:HI_0912"/>
<dbReference type="PATRIC" id="fig|71421.8.peg.953"/>
<dbReference type="eggNOG" id="COG2226">
    <property type="taxonomic scope" value="Bacteria"/>
</dbReference>
<dbReference type="HOGENOM" id="CLU_049749_4_0_6"/>
<dbReference type="OrthoDB" id="9791837at2"/>
<dbReference type="PhylomeDB" id="P44074"/>
<dbReference type="BioCyc" id="HINF71421:G1GJ1-951-MONOMER"/>
<dbReference type="Proteomes" id="UP000000579">
    <property type="component" value="Chromosome"/>
</dbReference>
<dbReference type="GO" id="GO:0008168">
    <property type="term" value="F:methyltransferase activity"/>
    <property type="evidence" value="ECO:0000318"/>
    <property type="project" value="GO_Central"/>
</dbReference>
<dbReference type="GO" id="GO:0008757">
    <property type="term" value="F:S-adenosylmethionine-dependent methyltransferase activity"/>
    <property type="evidence" value="ECO:0007669"/>
    <property type="project" value="InterPro"/>
</dbReference>
<dbReference type="CDD" id="cd02440">
    <property type="entry name" value="AdoMet_MTases"/>
    <property type="match status" value="1"/>
</dbReference>
<dbReference type="Gene3D" id="3.40.50.150">
    <property type="entry name" value="Vaccinia Virus protein VP39"/>
    <property type="match status" value="1"/>
</dbReference>
<dbReference type="InterPro" id="IPR013216">
    <property type="entry name" value="Methyltransf_11"/>
</dbReference>
<dbReference type="InterPro" id="IPR029063">
    <property type="entry name" value="SAM-dependent_MTases_sf"/>
</dbReference>
<dbReference type="PANTHER" id="PTHR43861:SF1">
    <property type="entry name" value="TRANS-ACONITATE 2-METHYLTRANSFERASE"/>
    <property type="match status" value="1"/>
</dbReference>
<dbReference type="PANTHER" id="PTHR43861">
    <property type="entry name" value="TRANS-ACONITATE 2-METHYLTRANSFERASE-RELATED"/>
    <property type="match status" value="1"/>
</dbReference>
<dbReference type="Pfam" id="PF08241">
    <property type="entry name" value="Methyltransf_11"/>
    <property type="match status" value="1"/>
</dbReference>
<dbReference type="SUPFAM" id="SSF53335">
    <property type="entry name" value="S-adenosyl-L-methionine-dependent methyltransferases"/>
    <property type="match status" value="1"/>
</dbReference>
<protein>
    <recommendedName>
        <fullName>Uncharacterized protein HI_0912</fullName>
    </recommendedName>
</protein>
<organism>
    <name type="scientific">Haemophilus influenzae (strain ATCC 51907 / DSM 11121 / KW20 / Rd)</name>
    <dbReference type="NCBI Taxonomy" id="71421"/>
    <lineage>
        <taxon>Bacteria</taxon>
        <taxon>Pseudomonadati</taxon>
        <taxon>Pseudomonadota</taxon>
        <taxon>Gammaproteobacteria</taxon>
        <taxon>Pasteurellales</taxon>
        <taxon>Pasteurellaceae</taxon>
        <taxon>Haemophilus</taxon>
    </lineage>
</organism>
<reference key="1">
    <citation type="journal article" date="1995" name="Science">
        <title>Whole-genome random sequencing and assembly of Haemophilus influenzae Rd.</title>
        <authorList>
            <person name="Fleischmann R.D."/>
            <person name="Adams M.D."/>
            <person name="White O."/>
            <person name="Clayton R.A."/>
            <person name="Kirkness E.F."/>
            <person name="Kerlavage A.R."/>
            <person name="Bult C.J."/>
            <person name="Tomb J.-F."/>
            <person name="Dougherty B.A."/>
            <person name="Merrick J.M."/>
            <person name="McKenney K."/>
            <person name="Sutton G.G."/>
            <person name="FitzHugh W."/>
            <person name="Fields C.A."/>
            <person name="Gocayne J.D."/>
            <person name="Scott J.D."/>
            <person name="Shirley R."/>
            <person name="Liu L.-I."/>
            <person name="Glodek A."/>
            <person name="Kelley J.M."/>
            <person name="Weidman J.F."/>
            <person name="Phillips C.A."/>
            <person name="Spriggs T."/>
            <person name="Hedblom E."/>
            <person name="Cotton M.D."/>
            <person name="Utterback T.R."/>
            <person name="Hanna M.C."/>
            <person name="Nguyen D.T."/>
            <person name="Saudek D.M."/>
            <person name="Brandon R.C."/>
            <person name="Fine L.D."/>
            <person name="Fritchman J.L."/>
            <person name="Fuhrmann J.L."/>
            <person name="Geoghagen N.S.M."/>
            <person name="Gnehm C.L."/>
            <person name="McDonald L.A."/>
            <person name="Small K.V."/>
            <person name="Fraser C.M."/>
            <person name="Smith H.O."/>
            <person name="Venter J.C."/>
        </authorList>
    </citation>
    <scope>NUCLEOTIDE SEQUENCE [LARGE SCALE GENOMIC DNA]</scope>
    <source>
        <strain>ATCC 51907 / DSM 11121 / KW20 / Rd</strain>
    </source>
</reference>